<name>HIS6_MYCLE</name>
<sequence length="261" mass="26663">MYSGNGLAVRVIPCLDVYCGRVVKGVNFKNLRDAGDLVELAAAYDAEGADELAFLDVTASSSGRATMLEVVRCTAEQVFIPLMVGGGVRTVADVDVLLRAGADKVAVNTAAIARPELLADMAGQFGSQCIVLSVDARTVPTGSARTPSGWEATTHGGYRGTGIDAVEWAARGADLGVGEILLNSMDADGTKAGFDLAMLRAVRAAVTVPVIASGGAGAIEHFVPAVTAGADAVLAASVFHFRELTIGQVKDAMAAAGIAVR</sequence>
<organism>
    <name type="scientific">Mycobacterium leprae (strain TN)</name>
    <dbReference type="NCBI Taxonomy" id="272631"/>
    <lineage>
        <taxon>Bacteria</taxon>
        <taxon>Bacillati</taxon>
        <taxon>Actinomycetota</taxon>
        <taxon>Actinomycetes</taxon>
        <taxon>Mycobacteriales</taxon>
        <taxon>Mycobacteriaceae</taxon>
        <taxon>Mycobacterium</taxon>
    </lineage>
</organism>
<comment type="function">
    <text evidence="1">IGPS catalyzes the conversion of PRFAR and glutamine to IGP, AICAR and glutamate. The HisF subunit catalyzes the cyclization activity that produces IGP and AICAR from PRFAR using the ammonia provided by the HisH subunit (By similarity).</text>
</comment>
<comment type="catalytic activity">
    <reaction>
        <text>5-[(5-phospho-1-deoxy-D-ribulos-1-ylimino)methylamino]-1-(5-phospho-beta-D-ribosyl)imidazole-4-carboxamide + L-glutamine = D-erythro-1-(imidazol-4-yl)glycerol 3-phosphate + 5-amino-1-(5-phospho-beta-D-ribosyl)imidazole-4-carboxamide + L-glutamate + H(+)</text>
        <dbReference type="Rhea" id="RHEA:24793"/>
        <dbReference type="ChEBI" id="CHEBI:15378"/>
        <dbReference type="ChEBI" id="CHEBI:29985"/>
        <dbReference type="ChEBI" id="CHEBI:58278"/>
        <dbReference type="ChEBI" id="CHEBI:58359"/>
        <dbReference type="ChEBI" id="CHEBI:58475"/>
        <dbReference type="ChEBI" id="CHEBI:58525"/>
        <dbReference type="EC" id="4.3.2.10"/>
    </reaction>
</comment>
<comment type="pathway">
    <text>Amino-acid biosynthesis; L-histidine biosynthesis; L-histidine from 5-phospho-alpha-D-ribose 1-diphosphate: step 5/9.</text>
</comment>
<comment type="subunit">
    <text evidence="1">Heterodimer of HisH and HisF.</text>
</comment>
<comment type="subcellular location">
    <subcellularLocation>
        <location evidence="1">Cytoplasm</location>
    </subcellularLocation>
</comment>
<comment type="similarity">
    <text evidence="3">Belongs to the HisA/HisF family.</text>
</comment>
<proteinExistence type="inferred from homology"/>
<protein>
    <recommendedName>
        <fullName>Imidazole glycerol phosphate synthase subunit HisF</fullName>
        <ecNumber>4.3.2.10</ecNumber>
    </recommendedName>
    <alternativeName>
        <fullName>IGP synthase cyclase subunit</fullName>
    </alternativeName>
    <alternativeName>
        <fullName>IGP synthase subunit HisF</fullName>
    </alternativeName>
    <alternativeName>
        <fullName>ImGP synthase subunit HisF</fullName>
        <shortName>IGPS subunit HisF</shortName>
    </alternativeName>
</protein>
<evidence type="ECO:0000250" key="1"/>
<evidence type="ECO:0000255" key="2"/>
<evidence type="ECO:0000305" key="3"/>
<gene>
    <name type="primary">hisF</name>
    <name type="ordered locus">ML1263</name>
    <name type="ORF">MLCB1610.26</name>
</gene>
<dbReference type="EC" id="4.3.2.10"/>
<dbReference type="EMBL" id="AL049913">
    <property type="protein sequence ID" value="CAB43172.1"/>
    <property type="molecule type" value="Genomic_DNA"/>
</dbReference>
<dbReference type="EMBL" id="AL583921">
    <property type="protein sequence ID" value="CAC31644.1"/>
    <property type="molecule type" value="Genomic_DNA"/>
</dbReference>
<dbReference type="PIR" id="T45251">
    <property type="entry name" value="T45251"/>
</dbReference>
<dbReference type="RefSeq" id="NP_301911.1">
    <property type="nucleotide sequence ID" value="NC_002677.1"/>
</dbReference>
<dbReference type="RefSeq" id="WP_010908232.1">
    <property type="nucleotide sequence ID" value="NC_002677.1"/>
</dbReference>
<dbReference type="SMR" id="Q9X7C2"/>
<dbReference type="STRING" id="272631.gene:17575095"/>
<dbReference type="KEGG" id="mle:ML1263"/>
<dbReference type="PATRIC" id="fig|272631.5.peg.2325"/>
<dbReference type="Leproma" id="ML1263"/>
<dbReference type="eggNOG" id="COG0107">
    <property type="taxonomic scope" value="Bacteria"/>
</dbReference>
<dbReference type="HOGENOM" id="CLU_048577_4_0_11"/>
<dbReference type="OrthoDB" id="9781903at2"/>
<dbReference type="UniPathway" id="UPA00031">
    <property type="reaction ID" value="UER00010"/>
</dbReference>
<dbReference type="Proteomes" id="UP000000806">
    <property type="component" value="Chromosome"/>
</dbReference>
<dbReference type="GO" id="GO:0005737">
    <property type="term" value="C:cytoplasm"/>
    <property type="evidence" value="ECO:0007669"/>
    <property type="project" value="UniProtKB-SubCell"/>
</dbReference>
<dbReference type="GO" id="GO:0000107">
    <property type="term" value="F:imidazoleglycerol-phosphate synthase activity"/>
    <property type="evidence" value="ECO:0007669"/>
    <property type="project" value="UniProtKB-UniRule"/>
</dbReference>
<dbReference type="GO" id="GO:0016829">
    <property type="term" value="F:lyase activity"/>
    <property type="evidence" value="ECO:0007669"/>
    <property type="project" value="UniProtKB-KW"/>
</dbReference>
<dbReference type="GO" id="GO:0000105">
    <property type="term" value="P:L-histidine biosynthetic process"/>
    <property type="evidence" value="ECO:0007669"/>
    <property type="project" value="UniProtKB-UniRule"/>
</dbReference>
<dbReference type="CDD" id="cd04731">
    <property type="entry name" value="HisF"/>
    <property type="match status" value="1"/>
</dbReference>
<dbReference type="FunFam" id="3.20.20.70:FF:000006">
    <property type="entry name" value="Imidazole glycerol phosphate synthase subunit HisF"/>
    <property type="match status" value="1"/>
</dbReference>
<dbReference type="Gene3D" id="3.20.20.70">
    <property type="entry name" value="Aldolase class I"/>
    <property type="match status" value="1"/>
</dbReference>
<dbReference type="HAMAP" id="MF_01013">
    <property type="entry name" value="HisF"/>
    <property type="match status" value="1"/>
</dbReference>
<dbReference type="InterPro" id="IPR013785">
    <property type="entry name" value="Aldolase_TIM"/>
</dbReference>
<dbReference type="InterPro" id="IPR006062">
    <property type="entry name" value="His_biosynth"/>
</dbReference>
<dbReference type="InterPro" id="IPR004651">
    <property type="entry name" value="HisF"/>
</dbReference>
<dbReference type="InterPro" id="IPR050064">
    <property type="entry name" value="IGPS_HisA/HisF"/>
</dbReference>
<dbReference type="InterPro" id="IPR011060">
    <property type="entry name" value="RibuloseP-bd_barrel"/>
</dbReference>
<dbReference type="NCBIfam" id="TIGR00735">
    <property type="entry name" value="hisF"/>
    <property type="match status" value="1"/>
</dbReference>
<dbReference type="PANTHER" id="PTHR21235:SF2">
    <property type="entry name" value="IMIDAZOLE GLYCEROL PHOSPHATE SYNTHASE HISHF"/>
    <property type="match status" value="1"/>
</dbReference>
<dbReference type="PANTHER" id="PTHR21235">
    <property type="entry name" value="IMIDAZOLE GLYCEROL PHOSPHATE SYNTHASE SUBUNIT HISF/H IGP SYNTHASE SUBUNIT HISF/H"/>
    <property type="match status" value="1"/>
</dbReference>
<dbReference type="Pfam" id="PF00977">
    <property type="entry name" value="His_biosynth"/>
    <property type="match status" value="1"/>
</dbReference>
<dbReference type="SUPFAM" id="SSF51366">
    <property type="entry name" value="Ribulose-phoshate binding barrel"/>
    <property type="match status" value="1"/>
</dbReference>
<accession>Q9X7C2</accession>
<reference key="1">
    <citation type="journal article" date="2001" name="Nature">
        <title>Massive gene decay in the leprosy bacillus.</title>
        <authorList>
            <person name="Cole S.T."/>
            <person name="Eiglmeier K."/>
            <person name="Parkhill J."/>
            <person name="James K.D."/>
            <person name="Thomson N.R."/>
            <person name="Wheeler P.R."/>
            <person name="Honore N."/>
            <person name="Garnier T."/>
            <person name="Churcher C.M."/>
            <person name="Harris D.E."/>
            <person name="Mungall K.L."/>
            <person name="Basham D."/>
            <person name="Brown D."/>
            <person name="Chillingworth T."/>
            <person name="Connor R."/>
            <person name="Davies R.M."/>
            <person name="Devlin K."/>
            <person name="Duthoy S."/>
            <person name="Feltwell T."/>
            <person name="Fraser A."/>
            <person name="Hamlin N."/>
            <person name="Holroyd S."/>
            <person name="Hornsby T."/>
            <person name="Jagels K."/>
            <person name="Lacroix C."/>
            <person name="Maclean J."/>
            <person name="Moule S."/>
            <person name="Murphy L.D."/>
            <person name="Oliver K."/>
            <person name="Quail M.A."/>
            <person name="Rajandream M.A."/>
            <person name="Rutherford K.M."/>
            <person name="Rutter S."/>
            <person name="Seeger K."/>
            <person name="Simon S."/>
            <person name="Simmonds M."/>
            <person name="Skelton J."/>
            <person name="Squares R."/>
            <person name="Squares S."/>
            <person name="Stevens K."/>
            <person name="Taylor K."/>
            <person name="Whitehead S."/>
            <person name="Woodward J.R."/>
            <person name="Barrell B.G."/>
        </authorList>
    </citation>
    <scope>NUCLEOTIDE SEQUENCE [LARGE SCALE GENOMIC DNA]</scope>
    <source>
        <strain>TN</strain>
    </source>
</reference>
<keyword id="KW-0028">Amino-acid biosynthesis</keyword>
<keyword id="KW-0963">Cytoplasm</keyword>
<keyword id="KW-0368">Histidine biosynthesis</keyword>
<keyword id="KW-0456">Lyase</keyword>
<keyword id="KW-1185">Reference proteome</keyword>
<feature type="chain" id="PRO_0000142183" description="Imidazole glycerol phosphate synthase subunit HisF">
    <location>
        <begin position="1"/>
        <end position="261"/>
    </location>
</feature>
<feature type="active site" evidence="2">
    <location>
        <position position="16"/>
    </location>
</feature>
<feature type="active site" evidence="2">
    <location>
        <position position="135"/>
    </location>
</feature>